<keyword id="KW-0025">Alternative splicing</keyword>
<keyword id="KW-0963">Cytoplasm</keyword>
<keyword id="KW-0597">Phosphoprotein</keyword>
<keyword id="KW-0650">Protein phosphatase inhibitor</keyword>
<keyword id="KW-1267">Proteomics identification</keyword>
<keyword id="KW-1185">Reference proteome</keyword>
<organism>
    <name type="scientific">Homo sapiens</name>
    <name type="common">Human</name>
    <dbReference type="NCBI Taxonomy" id="9606"/>
    <lineage>
        <taxon>Eukaryota</taxon>
        <taxon>Metazoa</taxon>
        <taxon>Chordata</taxon>
        <taxon>Craniata</taxon>
        <taxon>Vertebrata</taxon>
        <taxon>Euteleostomi</taxon>
        <taxon>Mammalia</taxon>
        <taxon>Eutheria</taxon>
        <taxon>Euarchontoglires</taxon>
        <taxon>Primates</taxon>
        <taxon>Haplorrhini</taxon>
        <taxon>Catarrhini</taxon>
        <taxon>Hominidae</taxon>
        <taxon>Homo</taxon>
    </lineage>
</organism>
<reference key="1">
    <citation type="journal article" date="2001" name="Biochem. Biophys. Res. Commun.">
        <title>Identification of human CPI-17, an inhibitory phosphoprotein for myosin phosphatase.</title>
        <authorList>
            <person name="Yamawaki K."/>
            <person name="Ito M."/>
            <person name="Machida H."/>
            <person name="Moriki N."/>
            <person name="Okamoto R."/>
            <person name="Isaka N."/>
            <person name="Shimpo H."/>
            <person name="Kohda A."/>
            <person name="Okumura K."/>
            <person name="Hartshorne D.J."/>
            <person name="Nakano T."/>
        </authorList>
    </citation>
    <scope>NUCLEOTIDE SEQUENCE [MRNA] (ISOFORMS 1 AND 2)</scope>
    <scope>TISSUE SPECIFICITY</scope>
    <source>
        <tissue>Aorta</tissue>
    </source>
</reference>
<reference key="2">
    <citation type="submission" date="1999-01" db="EMBL/GenBank/DDBJ databases">
        <title>Cloning a new human cDNA homologous to Sus scrofa mRNA for 17-KDa PKC-potentiated inhibitory protein of PP1.</title>
        <authorList>
            <person name="Cui W.C."/>
            <person name="Yu L."/>
            <person name="Zhao S.Y."/>
        </authorList>
    </citation>
    <scope>NUCLEOTIDE SEQUENCE [MRNA] (ISOFORM 1)</scope>
</reference>
<reference key="3">
    <citation type="journal article" date="2004" name="Biochem. J.">
        <title>GBPI, a novel gastrointestinal- and brain-specific PP1-inhibitory protein, is activated by PKC and inactivated by PKA.</title>
        <authorList>
            <person name="Liu Q.-R."/>
            <person name="Zhang P.-W."/>
            <person name="Lin Z."/>
            <person name="Li Q.-F."/>
            <person name="Woods A.S."/>
            <person name="Troncoso J."/>
            <person name="Uhl G.R."/>
        </authorList>
    </citation>
    <scope>NUCLEOTIDE SEQUENCE [GENOMIC DNA / MRNA] (ISOFORM 1)</scope>
    <source>
        <tissue>Smooth muscle</tissue>
    </source>
</reference>
<reference key="4">
    <citation type="journal article" date="2004" name="Genome Res.">
        <title>The status, quality, and expansion of the NIH full-length cDNA project: the Mammalian Gene Collection (MGC).</title>
        <authorList>
            <consortium name="The MGC Project Team"/>
        </authorList>
    </citation>
    <scope>NUCLEOTIDE SEQUENCE [LARGE SCALE MRNA] (ISOFORM 1)</scope>
    <source>
        <tissue>Pancreas</tissue>
    </source>
</reference>
<reference key="5">
    <citation type="journal article" date="2004" name="Biochem. Biophys. Res. Commun.">
        <title>Association of CPI-17 with protein kinase C and casein kinase I.</title>
        <authorList>
            <person name="Zemlickova E."/>
            <person name="Johannes F.J."/>
            <person name="Aitken A."/>
            <person name="Dubois T."/>
        </authorList>
    </citation>
    <scope>PHOSPHORYLATION AT THR-38</scope>
</reference>
<reference key="6">
    <citation type="journal article" date="2008" name="J. Proteome Res.">
        <title>Phosphoproteome of resting human platelets.</title>
        <authorList>
            <person name="Zahedi R.P."/>
            <person name="Lewandrowski U."/>
            <person name="Wiesner J."/>
            <person name="Wortelkamp S."/>
            <person name="Moebius J."/>
            <person name="Schuetz C."/>
            <person name="Walter U."/>
            <person name="Gambaryan S."/>
            <person name="Sickmann A."/>
        </authorList>
    </citation>
    <scope>PHOSPHORYLATION [LARGE SCALE ANALYSIS] AT SER-26</scope>
    <scope>IDENTIFICATION BY MASS SPECTROMETRY [LARGE SCALE ANALYSIS]</scope>
    <source>
        <tissue>Platelet</tissue>
    </source>
</reference>
<reference key="7">
    <citation type="journal article" date="2011" name="BMC Syst. Biol.">
        <title>Initial characterization of the human central proteome.</title>
        <authorList>
            <person name="Burkard T.R."/>
            <person name="Planyavsky M."/>
            <person name="Kaupe I."/>
            <person name="Breitwieser F.P."/>
            <person name="Buerckstuemmer T."/>
            <person name="Bennett K.L."/>
            <person name="Superti-Furga G."/>
            <person name="Colinge J."/>
        </authorList>
    </citation>
    <scope>IDENTIFICATION BY MASS SPECTROMETRY [LARGE SCALE ANALYSIS]</scope>
</reference>
<reference key="8">
    <citation type="journal article" date="2011" name="Sci. Signal.">
        <title>System-wide temporal characterization of the proteome and phosphoproteome of human embryonic stem cell differentiation.</title>
        <authorList>
            <person name="Rigbolt K.T."/>
            <person name="Prokhorova T.A."/>
            <person name="Akimov V."/>
            <person name="Henningsen J."/>
            <person name="Johansen P.T."/>
            <person name="Kratchmarova I."/>
            <person name="Kassem M."/>
            <person name="Mann M."/>
            <person name="Olsen J.V."/>
            <person name="Blagoev B."/>
        </authorList>
    </citation>
    <scope>PHOSPHORYLATION [LARGE SCALE ANALYSIS] AT SER-136</scope>
    <scope>IDENTIFICATION BY MASS SPECTROMETRY [LARGE SCALE ANALYSIS]</scope>
</reference>
<reference key="9">
    <citation type="journal article" date="2013" name="J. Proteome Res.">
        <title>Toward a comprehensive characterization of a human cancer cell phosphoproteome.</title>
        <authorList>
            <person name="Zhou H."/>
            <person name="Di Palma S."/>
            <person name="Preisinger C."/>
            <person name="Peng M."/>
            <person name="Polat A.N."/>
            <person name="Heck A.J."/>
            <person name="Mohammed S."/>
        </authorList>
    </citation>
    <scope>PHOSPHORYLATION [LARGE SCALE ANALYSIS] AT SER-26; SER-128; SER-134 AND SER-136</scope>
    <scope>IDENTIFICATION BY MASS SPECTROMETRY [LARGE SCALE ANALYSIS]</scope>
    <source>
        <tissue>Erythroleukemia</tissue>
    </source>
</reference>
<reference key="10">
    <citation type="journal article" date="2014" name="J. Proteomics">
        <title>An enzyme assisted RP-RPLC approach for in-depth analysis of human liver phosphoproteome.</title>
        <authorList>
            <person name="Bian Y."/>
            <person name="Song C."/>
            <person name="Cheng K."/>
            <person name="Dong M."/>
            <person name="Wang F."/>
            <person name="Huang J."/>
            <person name="Sun D."/>
            <person name="Wang L."/>
            <person name="Ye M."/>
            <person name="Zou H."/>
        </authorList>
    </citation>
    <scope>IDENTIFICATION BY MASS SPECTROMETRY [LARGE SCALE ANALYSIS]</scope>
    <source>
        <tissue>Liver</tissue>
    </source>
</reference>
<feature type="chain" id="PRO_0000071486" description="Protein phosphatase 1 regulatory subunit 14A">
    <location>
        <begin position="1"/>
        <end position="147"/>
    </location>
</feature>
<feature type="region of interest" description="Disordered" evidence="2">
    <location>
        <begin position="1"/>
        <end position="37"/>
    </location>
</feature>
<feature type="region of interest" description="Inhibitory">
    <location>
        <begin position="35"/>
        <end position="120"/>
    </location>
</feature>
<feature type="region of interest" description="Disordered" evidence="2">
    <location>
        <begin position="118"/>
        <end position="147"/>
    </location>
</feature>
<feature type="compositionally biased region" description="Basic residues" evidence="2">
    <location>
        <begin position="1"/>
        <end position="11"/>
    </location>
</feature>
<feature type="compositionally biased region" description="Polar residues" evidence="2">
    <location>
        <begin position="127"/>
        <end position="137"/>
    </location>
</feature>
<feature type="modified residue" description="Phosphoserine" evidence="7 9">
    <location>
        <position position="26"/>
    </location>
</feature>
<feature type="modified residue" description="Phosphothreonine; by PKC" evidence="4">
    <location>
        <position position="38"/>
    </location>
</feature>
<feature type="modified residue" description="Phosphoserine" evidence="9">
    <location>
        <position position="128"/>
    </location>
</feature>
<feature type="modified residue" description="Phosphoserine" evidence="9">
    <location>
        <position position="134"/>
    </location>
</feature>
<feature type="modified residue" description="Phosphoserine" evidence="8 9">
    <location>
        <position position="136"/>
    </location>
</feature>
<feature type="splice variant" id="VSP_011841" description="In isoform 2." evidence="5">
    <location>
        <begin position="68"/>
        <end position="94"/>
    </location>
</feature>
<feature type="sequence conflict" description="In Ref. 2; AAP97242." evidence="6" ref="2">
    <original>G</original>
    <variation>R</variation>
    <location>
        <position position="123"/>
    </location>
</feature>
<name>PP14A_HUMAN</name>
<dbReference type="EMBL" id="AB056508">
    <property type="protein sequence ID" value="BAB62502.1"/>
    <property type="molecule type" value="mRNA"/>
</dbReference>
<dbReference type="EMBL" id="AB056509">
    <property type="protein sequence ID" value="BAB62503.1"/>
    <property type="molecule type" value="mRNA"/>
</dbReference>
<dbReference type="EMBL" id="AF123763">
    <property type="protein sequence ID" value="AAP97242.1"/>
    <property type="molecule type" value="mRNA"/>
</dbReference>
<dbReference type="EMBL" id="AY050668">
    <property type="protein sequence ID" value="AAL24445.1"/>
    <property type="molecule type" value="Genomic_DNA"/>
</dbReference>
<dbReference type="EMBL" id="AY050670">
    <property type="protein sequence ID" value="AAL25828.1"/>
    <property type="molecule type" value="mRNA"/>
</dbReference>
<dbReference type="EMBL" id="BC021089">
    <property type="protein sequence ID" value="AAH21089.1"/>
    <property type="molecule type" value="mRNA"/>
</dbReference>
<dbReference type="CCDS" id="CCDS12509.1">
    <molecule id="Q96A00-1"/>
</dbReference>
<dbReference type="CCDS" id="CCDS58660.1">
    <molecule id="Q96A00-2"/>
</dbReference>
<dbReference type="PIR" id="JC7719">
    <property type="entry name" value="JC7719"/>
</dbReference>
<dbReference type="RefSeq" id="NP_001230876.1">
    <molecule id="Q96A00-2"/>
    <property type="nucleotide sequence ID" value="NM_001243947.2"/>
</dbReference>
<dbReference type="RefSeq" id="NP_150281.1">
    <molecule id="Q96A00-1"/>
    <property type="nucleotide sequence ID" value="NM_033256.3"/>
</dbReference>
<dbReference type="SMR" id="Q96A00"/>
<dbReference type="BioGRID" id="125153">
    <property type="interactions" value="26"/>
</dbReference>
<dbReference type="FunCoup" id="Q96A00">
    <property type="interactions" value="694"/>
</dbReference>
<dbReference type="IntAct" id="Q96A00">
    <property type="interactions" value="5"/>
</dbReference>
<dbReference type="MINT" id="Q96A00"/>
<dbReference type="STRING" id="9606.ENSP00000301242"/>
<dbReference type="GlyGen" id="Q96A00">
    <property type="glycosylation" value="1 site, 1 O-linked glycan (1 site)"/>
</dbReference>
<dbReference type="iPTMnet" id="Q96A00"/>
<dbReference type="PhosphoSitePlus" id="Q96A00"/>
<dbReference type="BioMuta" id="PPP1R14A"/>
<dbReference type="DMDM" id="55583974"/>
<dbReference type="jPOST" id="Q96A00"/>
<dbReference type="MassIVE" id="Q96A00"/>
<dbReference type="PaxDb" id="9606-ENSP00000301242"/>
<dbReference type="PeptideAtlas" id="Q96A00"/>
<dbReference type="ProteomicsDB" id="75885">
    <molecule id="Q96A00-1"/>
</dbReference>
<dbReference type="ProteomicsDB" id="75886">
    <molecule id="Q96A00-2"/>
</dbReference>
<dbReference type="Pumba" id="Q96A00"/>
<dbReference type="Antibodypedia" id="3563">
    <property type="antibodies" value="378 antibodies from 35 providers"/>
</dbReference>
<dbReference type="DNASU" id="94274"/>
<dbReference type="Ensembl" id="ENST00000301242.9">
    <molecule id="Q96A00-1"/>
    <property type="protein sequence ID" value="ENSP00000301242.3"/>
    <property type="gene ID" value="ENSG00000167641.11"/>
</dbReference>
<dbReference type="Ensembl" id="ENST00000347262.8">
    <molecule id="Q96A00-2"/>
    <property type="protein sequence ID" value="ENSP00000301243.3"/>
    <property type="gene ID" value="ENSG00000167641.11"/>
</dbReference>
<dbReference type="GeneID" id="94274"/>
<dbReference type="KEGG" id="hsa:94274"/>
<dbReference type="MANE-Select" id="ENST00000301242.9">
    <property type="protein sequence ID" value="ENSP00000301242.3"/>
    <property type="RefSeq nucleotide sequence ID" value="NM_033256.3"/>
    <property type="RefSeq protein sequence ID" value="NP_150281.1"/>
</dbReference>
<dbReference type="UCSC" id="uc002ohq.3">
    <molecule id="Q96A00-1"/>
    <property type="organism name" value="human"/>
</dbReference>
<dbReference type="AGR" id="HGNC:14871"/>
<dbReference type="CTD" id="94274"/>
<dbReference type="DisGeNET" id="94274"/>
<dbReference type="GeneCards" id="PPP1R14A"/>
<dbReference type="HGNC" id="HGNC:14871">
    <property type="gene designation" value="PPP1R14A"/>
</dbReference>
<dbReference type="HPA" id="ENSG00000167641">
    <property type="expression patterns" value="Tissue enhanced (brain, intestine)"/>
</dbReference>
<dbReference type="MIM" id="608153">
    <property type="type" value="gene"/>
</dbReference>
<dbReference type="neXtProt" id="NX_Q96A00"/>
<dbReference type="OpenTargets" id="ENSG00000167641"/>
<dbReference type="PharmGKB" id="PA33623"/>
<dbReference type="VEuPathDB" id="HostDB:ENSG00000167641"/>
<dbReference type="eggNOG" id="ENOG502S2I4">
    <property type="taxonomic scope" value="Eukaryota"/>
</dbReference>
<dbReference type="GeneTree" id="ENSGT00950000182985"/>
<dbReference type="HOGENOM" id="CLU_114155_2_0_1"/>
<dbReference type="InParanoid" id="Q96A00"/>
<dbReference type="OMA" id="HGRESEM"/>
<dbReference type="OrthoDB" id="8193882at2759"/>
<dbReference type="PAN-GO" id="Q96A00">
    <property type="GO annotations" value="1 GO annotation based on evolutionary models"/>
</dbReference>
<dbReference type="PhylomeDB" id="Q96A00"/>
<dbReference type="TreeFam" id="TF105546"/>
<dbReference type="PathwayCommons" id="Q96A00"/>
<dbReference type="Reactome" id="R-HSA-5625740">
    <property type="pathway name" value="RHO GTPases activate PKNs"/>
</dbReference>
<dbReference type="SignaLink" id="Q96A00"/>
<dbReference type="SIGNOR" id="Q96A00"/>
<dbReference type="BioGRID-ORCS" id="94274">
    <property type="hits" value="14 hits in 1157 CRISPR screens"/>
</dbReference>
<dbReference type="ChiTaRS" id="PPP1R14A">
    <property type="organism name" value="human"/>
</dbReference>
<dbReference type="GeneWiki" id="PPP1R14A"/>
<dbReference type="GenomeRNAi" id="94274"/>
<dbReference type="Pharos" id="Q96A00">
    <property type="development level" value="Tbio"/>
</dbReference>
<dbReference type="PRO" id="PR:Q96A00"/>
<dbReference type="Proteomes" id="UP000005640">
    <property type="component" value="Chromosome 19"/>
</dbReference>
<dbReference type="RNAct" id="Q96A00">
    <property type="molecule type" value="protein"/>
</dbReference>
<dbReference type="Bgee" id="ENSG00000167641">
    <property type="expression patterns" value="Expressed in right coronary artery and 149 other cell types or tissues"/>
</dbReference>
<dbReference type="ExpressionAtlas" id="Q96A00">
    <property type="expression patterns" value="baseline and differential"/>
</dbReference>
<dbReference type="GO" id="GO:0005829">
    <property type="term" value="C:cytosol"/>
    <property type="evidence" value="ECO:0000304"/>
    <property type="project" value="Reactome"/>
</dbReference>
<dbReference type="GO" id="GO:0004865">
    <property type="term" value="F:protein serine/threonine phosphatase inhibitor activity"/>
    <property type="evidence" value="ECO:0000318"/>
    <property type="project" value="GO_Central"/>
</dbReference>
<dbReference type="GO" id="GO:0071466">
    <property type="term" value="P:cellular response to xenobiotic stimulus"/>
    <property type="evidence" value="ECO:0007669"/>
    <property type="project" value="Ensembl"/>
</dbReference>
<dbReference type="FunFam" id="1.10.150.220:FF:000002">
    <property type="entry name" value="protein phosphatase 1 regulatory subunit 14A"/>
    <property type="match status" value="1"/>
</dbReference>
<dbReference type="Gene3D" id="1.10.150.220">
    <property type="entry name" value="CPI-17"/>
    <property type="match status" value="1"/>
</dbReference>
<dbReference type="InterPro" id="IPR008025">
    <property type="entry name" value="CPI-17"/>
</dbReference>
<dbReference type="InterPro" id="IPR036658">
    <property type="entry name" value="CPI-17_sf"/>
</dbReference>
<dbReference type="PANTHER" id="PTHR16188">
    <property type="entry name" value="PROTEIN PHOSPHATASE 1 INHIBITOR POTENTIATED BY PROTEIN KINASE C"/>
    <property type="match status" value="1"/>
</dbReference>
<dbReference type="PANTHER" id="PTHR16188:SF4">
    <property type="entry name" value="PROTEIN PHOSPHATASE 1 REGULATORY SUBUNIT 14A"/>
    <property type="match status" value="1"/>
</dbReference>
<dbReference type="Pfam" id="PF05361">
    <property type="entry name" value="PP1_inhibitor"/>
    <property type="match status" value="1"/>
</dbReference>
<dbReference type="SUPFAM" id="SSF81790">
    <property type="entry name" value="Myosin phosphatase inhibitor 17kDa protein, CPI-17"/>
    <property type="match status" value="1"/>
</dbReference>
<accession>Q96A00</accession>
<accession>Q7Z4X7</accession>
<accession>Q96S54</accession>
<protein>
    <recommendedName>
        <fullName>Protein phosphatase 1 regulatory subunit 14A</fullName>
    </recommendedName>
    <alternativeName>
        <fullName>17 kDa PKC-potentiated inhibitory protein of PP1</fullName>
    </alternativeName>
    <alternativeName>
        <fullName>Protein kinase C-potentiated inhibitor protein of 17 kDa</fullName>
        <shortName>CPI-17</shortName>
    </alternativeName>
</protein>
<sequence>MAAQRLGKRVLSKLQSPSRARGPGGSPGGLQKRHARVTVKYDRRELQRRLDVEKWIDGRLEELYRGMEADMPDEINIDELLELESEEERSRKIQGLLKSCGKPVEDFIQELLAKLQGLHRQPGLRQPSPSHDGSLSPLQDRARTAHP</sequence>
<gene>
    <name type="primary">PPP1R14A</name>
    <name type="synonym">CPI17</name>
    <name type="synonym">PPP1INL</name>
</gene>
<proteinExistence type="evidence at protein level"/>
<evidence type="ECO:0000250" key="1"/>
<evidence type="ECO:0000256" key="2">
    <source>
        <dbReference type="SAM" id="MobiDB-lite"/>
    </source>
</evidence>
<evidence type="ECO:0000269" key="3">
    <source>
    </source>
</evidence>
<evidence type="ECO:0000269" key="4">
    <source>
    </source>
</evidence>
<evidence type="ECO:0000303" key="5">
    <source>
    </source>
</evidence>
<evidence type="ECO:0000305" key="6"/>
<evidence type="ECO:0007744" key="7">
    <source>
    </source>
</evidence>
<evidence type="ECO:0007744" key="8">
    <source>
    </source>
</evidence>
<evidence type="ECO:0007744" key="9">
    <source>
    </source>
</evidence>
<comment type="function">
    <text>Inhibitor of PPP1CA. Has over 1000-fold higher inhibitory activity when phosphorylated, creating a molecular switch for regulating the phosphorylation status of PPP1CA substrates and smooth muscle contraction.</text>
</comment>
<comment type="subcellular location">
    <subcellularLocation>
        <location evidence="1">Cytoplasm</location>
    </subcellularLocation>
</comment>
<comment type="alternative products">
    <event type="alternative splicing"/>
    <isoform>
        <id>Q96A00-1</id>
        <name>1</name>
        <name>CPI-17alpha</name>
        <sequence type="displayed"/>
    </isoform>
    <isoform>
        <id>Q96A00-2</id>
        <name>2</name>
        <name>CPI-17beta</name>
        <sequence type="described" ref="VSP_011841"/>
    </isoform>
</comment>
<comment type="tissue specificity">
    <text evidence="3">Isoform 1 is detected in aorta and testis. Isoform 2 is detected in aorta.</text>
</comment>
<comment type="similarity">
    <text evidence="6">Belongs to the PP1 inhibitor family.</text>
</comment>